<dbReference type="EC" id="2.7.7.23" evidence="1"/>
<dbReference type="EC" id="2.3.1.157" evidence="1"/>
<dbReference type="EMBL" id="CP000110">
    <property type="protein sequence ID" value="ABB34884.1"/>
    <property type="molecule type" value="Genomic_DNA"/>
</dbReference>
<dbReference type="RefSeq" id="WP_011364105.1">
    <property type="nucleotide sequence ID" value="NC_007516.1"/>
</dbReference>
<dbReference type="SMR" id="Q3AKJ8"/>
<dbReference type="STRING" id="110662.Syncc9605_1129"/>
<dbReference type="KEGG" id="syd:Syncc9605_1129"/>
<dbReference type="eggNOG" id="COG1207">
    <property type="taxonomic scope" value="Bacteria"/>
</dbReference>
<dbReference type="HOGENOM" id="CLU_029499_15_2_3"/>
<dbReference type="OrthoDB" id="9775031at2"/>
<dbReference type="UniPathway" id="UPA00113">
    <property type="reaction ID" value="UER00532"/>
</dbReference>
<dbReference type="UniPathway" id="UPA00113">
    <property type="reaction ID" value="UER00533"/>
</dbReference>
<dbReference type="UniPathway" id="UPA00973"/>
<dbReference type="GO" id="GO:0031470">
    <property type="term" value="C:carboxysome"/>
    <property type="evidence" value="ECO:0007669"/>
    <property type="project" value="UniProtKB-ARBA"/>
</dbReference>
<dbReference type="GO" id="GO:0005737">
    <property type="term" value="C:cytoplasm"/>
    <property type="evidence" value="ECO:0007669"/>
    <property type="project" value="UniProtKB-SubCell"/>
</dbReference>
<dbReference type="GO" id="GO:0016020">
    <property type="term" value="C:membrane"/>
    <property type="evidence" value="ECO:0007669"/>
    <property type="project" value="GOC"/>
</dbReference>
<dbReference type="GO" id="GO:0019134">
    <property type="term" value="F:glucosamine-1-phosphate N-acetyltransferase activity"/>
    <property type="evidence" value="ECO:0007669"/>
    <property type="project" value="UniProtKB-UniRule"/>
</dbReference>
<dbReference type="GO" id="GO:0000287">
    <property type="term" value="F:magnesium ion binding"/>
    <property type="evidence" value="ECO:0007669"/>
    <property type="project" value="UniProtKB-UniRule"/>
</dbReference>
<dbReference type="GO" id="GO:0043886">
    <property type="term" value="F:structural constituent of carboxysome shell"/>
    <property type="evidence" value="ECO:0007669"/>
    <property type="project" value="UniProtKB-ARBA"/>
</dbReference>
<dbReference type="GO" id="GO:0003977">
    <property type="term" value="F:UDP-N-acetylglucosamine diphosphorylase activity"/>
    <property type="evidence" value="ECO:0007669"/>
    <property type="project" value="UniProtKB-UniRule"/>
</dbReference>
<dbReference type="GO" id="GO:0000902">
    <property type="term" value="P:cell morphogenesis"/>
    <property type="evidence" value="ECO:0007669"/>
    <property type="project" value="UniProtKB-UniRule"/>
</dbReference>
<dbReference type="GO" id="GO:0071555">
    <property type="term" value="P:cell wall organization"/>
    <property type="evidence" value="ECO:0007669"/>
    <property type="project" value="UniProtKB-KW"/>
</dbReference>
<dbReference type="GO" id="GO:0009245">
    <property type="term" value="P:lipid A biosynthetic process"/>
    <property type="evidence" value="ECO:0007669"/>
    <property type="project" value="UniProtKB-UniRule"/>
</dbReference>
<dbReference type="GO" id="GO:0009252">
    <property type="term" value="P:peptidoglycan biosynthetic process"/>
    <property type="evidence" value="ECO:0007669"/>
    <property type="project" value="UniProtKB-UniRule"/>
</dbReference>
<dbReference type="GO" id="GO:0008360">
    <property type="term" value="P:regulation of cell shape"/>
    <property type="evidence" value="ECO:0007669"/>
    <property type="project" value="UniProtKB-KW"/>
</dbReference>
<dbReference type="GO" id="GO:0006048">
    <property type="term" value="P:UDP-N-acetylglucosamine biosynthetic process"/>
    <property type="evidence" value="ECO:0007669"/>
    <property type="project" value="UniProtKB-UniPathway"/>
</dbReference>
<dbReference type="CDD" id="cd02540">
    <property type="entry name" value="GT2_GlmU_N_bac"/>
    <property type="match status" value="1"/>
</dbReference>
<dbReference type="CDD" id="cd03353">
    <property type="entry name" value="LbH_GlmU_C"/>
    <property type="match status" value="1"/>
</dbReference>
<dbReference type="Gene3D" id="2.160.10.10">
    <property type="entry name" value="Hexapeptide repeat proteins"/>
    <property type="match status" value="1"/>
</dbReference>
<dbReference type="Gene3D" id="3.90.550.10">
    <property type="entry name" value="Spore Coat Polysaccharide Biosynthesis Protein SpsA, Chain A"/>
    <property type="match status" value="1"/>
</dbReference>
<dbReference type="HAMAP" id="MF_01631">
    <property type="entry name" value="GlmU"/>
    <property type="match status" value="1"/>
</dbReference>
<dbReference type="InterPro" id="IPR005882">
    <property type="entry name" value="Bifunctional_GlmU"/>
</dbReference>
<dbReference type="InterPro" id="IPR050065">
    <property type="entry name" value="GlmU-like"/>
</dbReference>
<dbReference type="InterPro" id="IPR038009">
    <property type="entry name" value="GlmU_C_LbH"/>
</dbReference>
<dbReference type="InterPro" id="IPR001451">
    <property type="entry name" value="Hexapep"/>
</dbReference>
<dbReference type="InterPro" id="IPR025877">
    <property type="entry name" value="MobA-like_NTP_Trfase"/>
</dbReference>
<dbReference type="InterPro" id="IPR029044">
    <property type="entry name" value="Nucleotide-diphossugar_trans"/>
</dbReference>
<dbReference type="InterPro" id="IPR011004">
    <property type="entry name" value="Trimer_LpxA-like_sf"/>
</dbReference>
<dbReference type="NCBIfam" id="TIGR01173">
    <property type="entry name" value="glmU"/>
    <property type="match status" value="1"/>
</dbReference>
<dbReference type="NCBIfam" id="NF010940">
    <property type="entry name" value="PRK14360.1"/>
    <property type="match status" value="1"/>
</dbReference>
<dbReference type="PANTHER" id="PTHR43584:SF3">
    <property type="entry name" value="BIFUNCTIONAL PROTEIN GLMU"/>
    <property type="match status" value="1"/>
</dbReference>
<dbReference type="PANTHER" id="PTHR43584">
    <property type="entry name" value="NUCLEOTIDYL TRANSFERASE"/>
    <property type="match status" value="1"/>
</dbReference>
<dbReference type="Pfam" id="PF00132">
    <property type="entry name" value="Hexapep"/>
    <property type="match status" value="3"/>
</dbReference>
<dbReference type="Pfam" id="PF12804">
    <property type="entry name" value="NTP_transf_3"/>
    <property type="match status" value="1"/>
</dbReference>
<dbReference type="SUPFAM" id="SSF53448">
    <property type="entry name" value="Nucleotide-diphospho-sugar transferases"/>
    <property type="match status" value="1"/>
</dbReference>
<dbReference type="SUPFAM" id="SSF51161">
    <property type="entry name" value="Trimeric LpxA-like enzymes"/>
    <property type="match status" value="1"/>
</dbReference>
<organism>
    <name type="scientific">Synechococcus sp. (strain CC9605)</name>
    <dbReference type="NCBI Taxonomy" id="110662"/>
    <lineage>
        <taxon>Bacteria</taxon>
        <taxon>Bacillati</taxon>
        <taxon>Cyanobacteriota</taxon>
        <taxon>Cyanophyceae</taxon>
        <taxon>Synechococcales</taxon>
        <taxon>Synechococcaceae</taxon>
        <taxon>Synechococcus</taxon>
    </lineage>
</organism>
<name>GLMU_SYNSC</name>
<protein>
    <recommendedName>
        <fullName evidence="1">Bifunctional protein GlmU</fullName>
    </recommendedName>
    <domain>
        <recommendedName>
            <fullName evidence="1">UDP-N-acetylglucosamine pyrophosphorylase</fullName>
            <ecNumber evidence="1">2.7.7.23</ecNumber>
        </recommendedName>
        <alternativeName>
            <fullName evidence="1">N-acetylglucosamine-1-phosphate uridyltransferase</fullName>
        </alternativeName>
    </domain>
    <domain>
        <recommendedName>
            <fullName evidence="1">Glucosamine-1-phosphate N-acetyltransferase</fullName>
            <ecNumber evidence="1">2.3.1.157</ecNumber>
        </recommendedName>
    </domain>
</protein>
<proteinExistence type="inferred from homology"/>
<gene>
    <name evidence="1" type="primary">glmU</name>
    <name type="ordered locus">Syncc9605_1129</name>
</gene>
<feature type="chain" id="PRO_0000244312" description="Bifunctional protein GlmU">
    <location>
        <begin position="1"/>
        <end position="450"/>
    </location>
</feature>
<feature type="region of interest" description="Pyrophosphorylase" evidence="1">
    <location>
        <begin position="1"/>
        <end position="226"/>
    </location>
</feature>
<feature type="region of interest" description="Linker" evidence="1">
    <location>
        <begin position="227"/>
        <end position="247"/>
    </location>
</feature>
<feature type="region of interest" description="N-acetyltransferase" evidence="1">
    <location>
        <begin position="248"/>
        <end position="450"/>
    </location>
</feature>
<feature type="active site" description="Proton acceptor" evidence="1">
    <location>
        <position position="359"/>
    </location>
</feature>
<feature type="binding site" evidence="1">
    <location>
        <begin position="7"/>
        <end position="10"/>
    </location>
    <ligand>
        <name>UDP-N-acetyl-alpha-D-glucosamine</name>
        <dbReference type="ChEBI" id="CHEBI:57705"/>
    </ligand>
</feature>
<feature type="binding site" evidence="1">
    <location>
        <position position="21"/>
    </location>
    <ligand>
        <name>UDP-N-acetyl-alpha-D-glucosamine</name>
        <dbReference type="ChEBI" id="CHEBI:57705"/>
    </ligand>
</feature>
<feature type="binding site" evidence="1">
    <location>
        <position position="73"/>
    </location>
    <ligand>
        <name>UDP-N-acetyl-alpha-D-glucosamine</name>
        <dbReference type="ChEBI" id="CHEBI:57705"/>
    </ligand>
</feature>
<feature type="binding site" evidence="1">
    <location>
        <begin position="78"/>
        <end position="79"/>
    </location>
    <ligand>
        <name>UDP-N-acetyl-alpha-D-glucosamine</name>
        <dbReference type="ChEBI" id="CHEBI:57705"/>
    </ligand>
</feature>
<feature type="binding site" evidence="1">
    <location>
        <position position="103"/>
    </location>
    <ligand>
        <name>Mg(2+)</name>
        <dbReference type="ChEBI" id="CHEBI:18420"/>
    </ligand>
</feature>
<feature type="binding site" evidence="1">
    <location>
        <position position="140"/>
    </location>
    <ligand>
        <name>UDP-N-acetyl-alpha-D-glucosamine</name>
        <dbReference type="ChEBI" id="CHEBI:57705"/>
    </ligand>
</feature>
<feature type="binding site" evidence="1">
    <location>
        <position position="155"/>
    </location>
    <ligand>
        <name>UDP-N-acetyl-alpha-D-glucosamine</name>
        <dbReference type="ChEBI" id="CHEBI:57705"/>
    </ligand>
</feature>
<feature type="binding site" evidence="1">
    <location>
        <position position="170"/>
    </location>
    <ligand>
        <name>UDP-N-acetyl-alpha-D-glucosamine</name>
        <dbReference type="ChEBI" id="CHEBI:57705"/>
    </ligand>
</feature>
<feature type="binding site" evidence="1">
    <location>
        <position position="224"/>
    </location>
    <ligand>
        <name>Mg(2+)</name>
        <dbReference type="ChEBI" id="CHEBI:18420"/>
    </ligand>
</feature>
<feature type="binding site" evidence="1">
    <location>
        <position position="224"/>
    </location>
    <ligand>
        <name>UDP-N-acetyl-alpha-D-glucosamine</name>
        <dbReference type="ChEBI" id="CHEBI:57705"/>
    </ligand>
</feature>
<feature type="binding site" evidence="1">
    <location>
        <position position="329"/>
    </location>
    <ligand>
        <name>UDP-N-acetyl-alpha-D-glucosamine</name>
        <dbReference type="ChEBI" id="CHEBI:57705"/>
    </ligand>
</feature>
<feature type="binding site" evidence="1">
    <location>
        <position position="347"/>
    </location>
    <ligand>
        <name>UDP-N-acetyl-alpha-D-glucosamine</name>
        <dbReference type="ChEBI" id="CHEBI:57705"/>
    </ligand>
</feature>
<feature type="binding site" evidence="1">
    <location>
        <position position="362"/>
    </location>
    <ligand>
        <name>UDP-N-acetyl-alpha-D-glucosamine</name>
        <dbReference type="ChEBI" id="CHEBI:57705"/>
    </ligand>
</feature>
<feature type="binding site" evidence="1">
    <location>
        <position position="373"/>
    </location>
    <ligand>
        <name>UDP-N-acetyl-alpha-D-glucosamine</name>
        <dbReference type="ChEBI" id="CHEBI:57705"/>
    </ligand>
</feature>
<feature type="binding site" evidence="1">
    <location>
        <position position="376"/>
    </location>
    <ligand>
        <name>acetyl-CoA</name>
        <dbReference type="ChEBI" id="CHEBI:57288"/>
    </ligand>
</feature>
<feature type="binding site" evidence="1">
    <location>
        <begin position="382"/>
        <end position="383"/>
    </location>
    <ligand>
        <name>acetyl-CoA</name>
        <dbReference type="ChEBI" id="CHEBI:57288"/>
    </ligand>
</feature>
<feature type="binding site" evidence="1">
    <location>
        <position position="419"/>
    </location>
    <ligand>
        <name>acetyl-CoA</name>
        <dbReference type="ChEBI" id="CHEBI:57288"/>
    </ligand>
</feature>
<feature type="binding site" evidence="1">
    <location>
        <position position="436"/>
    </location>
    <ligand>
        <name>acetyl-CoA</name>
        <dbReference type="ChEBI" id="CHEBI:57288"/>
    </ligand>
</feature>
<comment type="function">
    <text evidence="1">Catalyzes the last two sequential reactions in the de novo biosynthetic pathway for UDP-N-acetylglucosamine (UDP-GlcNAc). The C-terminal domain catalyzes the transfer of acetyl group from acetyl coenzyme A to glucosamine-1-phosphate (GlcN-1-P) to produce N-acetylglucosamine-1-phosphate (GlcNAc-1-P), which is converted into UDP-GlcNAc by the transfer of uridine 5-monophosphate (from uridine 5-triphosphate), a reaction catalyzed by the N-terminal domain.</text>
</comment>
<comment type="catalytic activity">
    <reaction evidence="1">
        <text>alpha-D-glucosamine 1-phosphate + acetyl-CoA = N-acetyl-alpha-D-glucosamine 1-phosphate + CoA + H(+)</text>
        <dbReference type="Rhea" id="RHEA:13725"/>
        <dbReference type="ChEBI" id="CHEBI:15378"/>
        <dbReference type="ChEBI" id="CHEBI:57287"/>
        <dbReference type="ChEBI" id="CHEBI:57288"/>
        <dbReference type="ChEBI" id="CHEBI:57776"/>
        <dbReference type="ChEBI" id="CHEBI:58516"/>
        <dbReference type="EC" id="2.3.1.157"/>
    </reaction>
</comment>
<comment type="catalytic activity">
    <reaction evidence="1">
        <text>N-acetyl-alpha-D-glucosamine 1-phosphate + UTP + H(+) = UDP-N-acetyl-alpha-D-glucosamine + diphosphate</text>
        <dbReference type="Rhea" id="RHEA:13509"/>
        <dbReference type="ChEBI" id="CHEBI:15378"/>
        <dbReference type="ChEBI" id="CHEBI:33019"/>
        <dbReference type="ChEBI" id="CHEBI:46398"/>
        <dbReference type="ChEBI" id="CHEBI:57705"/>
        <dbReference type="ChEBI" id="CHEBI:57776"/>
        <dbReference type="EC" id="2.7.7.23"/>
    </reaction>
</comment>
<comment type="cofactor">
    <cofactor evidence="1">
        <name>Mg(2+)</name>
        <dbReference type="ChEBI" id="CHEBI:18420"/>
    </cofactor>
    <text evidence="1">Binds 1 Mg(2+) ion per subunit.</text>
</comment>
<comment type="pathway">
    <text evidence="1">Nucleotide-sugar biosynthesis; UDP-N-acetyl-alpha-D-glucosamine biosynthesis; N-acetyl-alpha-D-glucosamine 1-phosphate from alpha-D-glucosamine 6-phosphate (route II): step 2/2.</text>
</comment>
<comment type="pathway">
    <text evidence="1">Nucleotide-sugar biosynthesis; UDP-N-acetyl-alpha-D-glucosamine biosynthesis; UDP-N-acetyl-alpha-D-glucosamine from N-acetyl-alpha-D-glucosamine 1-phosphate: step 1/1.</text>
</comment>
<comment type="pathway">
    <text evidence="1">Bacterial outer membrane biogenesis; LPS lipid A biosynthesis.</text>
</comment>
<comment type="subunit">
    <text evidence="1">Homotrimer.</text>
</comment>
<comment type="subcellular location">
    <subcellularLocation>
        <location evidence="1">Cytoplasm</location>
    </subcellularLocation>
</comment>
<comment type="similarity">
    <text evidence="1">In the N-terminal section; belongs to the N-acetylglucosamine-1-phosphate uridyltransferase family.</text>
</comment>
<comment type="similarity">
    <text evidence="1">In the C-terminal section; belongs to the transferase hexapeptide repeat family.</text>
</comment>
<keyword id="KW-0012">Acyltransferase</keyword>
<keyword id="KW-0133">Cell shape</keyword>
<keyword id="KW-0961">Cell wall biogenesis/degradation</keyword>
<keyword id="KW-0963">Cytoplasm</keyword>
<keyword id="KW-0460">Magnesium</keyword>
<keyword id="KW-0479">Metal-binding</keyword>
<keyword id="KW-0511">Multifunctional enzyme</keyword>
<keyword id="KW-0548">Nucleotidyltransferase</keyword>
<keyword id="KW-0573">Peptidoglycan synthesis</keyword>
<keyword id="KW-0677">Repeat</keyword>
<keyword id="KW-0808">Transferase</keyword>
<reference key="1">
    <citation type="submission" date="2005-07" db="EMBL/GenBank/DDBJ databases">
        <title>Complete sequence of Synechococcus sp. CC9605.</title>
        <authorList>
            <consortium name="US DOE Joint Genome Institute"/>
            <person name="Copeland A."/>
            <person name="Lucas S."/>
            <person name="Lapidus A."/>
            <person name="Barry K."/>
            <person name="Detter J.C."/>
            <person name="Glavina T."/>
            <person name="Hammon N."/>
            <person name="Israni S."/>
            <person name="Pitluck S."/>
            <person name="Schmutz J."/>
            <person name="Martinez M."/>
            <person name="Larimer F."/>
            <person name="Land M."/>
            <person name="Kyrpides N."/>
            <person name="Ivanova N."/>
            <person name="Richardson P."/>
        </authorList>
    </citation>
    <scope>NUCLEOTIDE SEQUENCE [LARGE SCALE GENOMIC DNA]</scope>
    <source>
        <strain>CC9605</strain>
    </source>
</reference>
<accession>Q3AKJ8</accession>
<evidence type="ECO:0000255" key="1">
    <source>
        <dbReference type="HAMAP-Rule" id="MF_01631"/>
    </source>
</evidence>
<sequence length="450" mass="47904">MLAVAVLAAGKGTRMKSALPKVLQPLAGATLVERVLASAGNLQPERRLLIVGHQAERVEQQLAPLGGLEFVLQQPQNGTGHAVQQLIPSLQGFEGELLVLNGDVPLLRSETVEALVEQHRASGADVTLLTARLEDPTGYGRVFADADGQVSSIIEHRDCTDEQRSNNLTNAGIYCFNWTALANVLPKLSTDNDQGELYLTDTVAMLPKAMHLEVADADEVNGINNRRQLAQCEALLQQRLRHHWMDEGVTFIDPESCTLSEGCSFGRDVVIDPQTHFRGRCVIGDNSRIGPGSLIEDASVGTNVSVVHSVVREASIGNDVAIGPFAHLRPAADVGDGCRIGNFVEVKKSQLGAGTKVNHLSYIGDAQLGEKVNVGAGTITANYDGVNKHRTMIGSNSKTGANSVLVAPINVGERATIGAGSTITKDVADGALAIGRARQMTKEGWAERKV</sequence>